<sequence length="751" mass="83498">MSKGECPMRTANVAGGGTKIKDWWPNELPVSVLRQHDPRQNPLTSDFNYAEEFKKLDYNALKKDLTALMTDSQDWWPADFGHYGGLFVRMAWHSAGTYRVTDGRGGGGDGQQRFAPLNAWPDNVSLDKARRLLWPIKQKYGNKISWADLMLLTGNVALESMGCETFGFAGGRPDTFQSDESIYWGGEDTWLGNDVRYSNGNKGVSGEGVVDGDQHKMDHKDIHSRDLEQPVAAAHMGLIYVNPEGPDGVPDPIAAARDIRTTFHRMAMNDEETAALIIGGHSFGKTHGAAPSENTGPDPNSEDLSTQGFGWINKHGSGKGPDTITSGLEVTWTGTPTKWSNKYLEYLYKYEWELEKSPAGANQWVAKTEDHIIPDAYDANKKHKPRMLTTDMSMRMDPGFEKITRRWLDHPQELHDAFIRAWFKLLHRDMGPRSRWVGPEIPKEVLLWEDPVPEVDHALVEESDISALKKQILEAGIEPSKLIRTAWASAASYRGSDKRGGANGARIRLAPQKDWEVNNPKELAEVLKALEGVQSKFNGSASGGKKISLADLIVLAGTAAVEKAAGVSVPFTPGRTDATEEQTDAKSFEHLEPATDPFRNYGKSSDRARTEQLDLDKASLLRLTAPELTVLVGGMRALNANWDSSSHGIFTKRPGQLTNDFFVNLLDINTEWKAADSSKLPELYEGFDRKSGQKKWTGTRHDLVYGSHPELRAIAEVYAQPDNSDKFVKDFVKAWDKVMSNDRFDLKAKSS</sequence>
<proteinExistence type="inferred from homology"/>
<protein>
    <recommendedName>
        <fullName evidence="1">Catalase-peroxidase</fullName>
        <shortName evidence="1">CP</shortName>
        <ecNumber evidence="1">1.11.1.21</ecNumber>
    </recommendedName>
    <alternativeName>
        <fullName evidence="1">Peroxidase/catalase</fullName>
    </alternativeName>
</protein>
<keyword id="KW-0963">Cytoplasm</keyword>
<keyword id="KW-0349">Heme</keyword>
<keyword id="KW-0376">Hydrogen peroxide</keyword>
<keyword id="KW-0408">Iron</keyword>
<keyword id="KW-0479">Metal-binding</keyword>
<keyword id="KW-0560">Oxidoreductase</keyword>
<keyword id="KW-0575">Peroxidase</keyword>
<evidence type="ECO:0000255" key="1">
    <source>
        <dbReference type="HAMAP-Rule" id="MF_03108"/>
    </source>
</evidence>
<dbReference type="EC" id="1.11.1.21" evidence="1"/>
<dbReference type="EMBL" id="CH445352">
    <property type="protein sequence ID" value="EAT78864.1"/>
    <property type="molecule type" value="Genomic_DNA"/>
</dbReference>
<dbReference type="RefSeq" id="XP_001804042.1">
    <property type="nucleotide sequence ID" value="XM_001803990.1"/>
</dbReference>
<dbReference type="SMR" id="Q0U324"/>
<dbReference type="STRING" id="321614.Q0U324"/>
<dbReference type="PeroxiBase" id="3449">
    <property type="entry name" value="PnoCP01"/>
</dbReference>
<dbReference type="EnsemblFungi" id="SNOT_13840">
    <property type="protein sequence ID" value="SNOT_13840"/>
    <property type="gene ID" value="SNOG_13840"/>
</dbReference>
<dbReference type="GeneID" id="5980964"/>
<dbReference type="KEGG" id="pno:SNOG_13840"/>
<dbReference type="VEuPathDB" id="FungiDB:JI435_138400"/>
<dbReference type="eggNOG" id="ENOG502QTDY">
    <property type="taxonomic scope" value="Eukaryota"/>
</dbReference>
<dbReference type="HOGENOM" id="CLU_025424_2_0_1"/>
<dbReference type="InParanoid" id="Q0U324"/>
<dbReference type="OMA" id="GPETTWL"/>
<dbReference type="OrthoDB" id="407695at2759"/>
<dbReference type="Proteomes" id="UP000001055">
    <property type="component" value="Unassembled WGS sequence"/>
</dbReference>
<dbReference type="GO" id="GO:0005829">
    <property type="term" value="C:cytosol"/>
    <property type="evidence" value="ECO:0000318"/>
    <property type="project" value="GO_Central"/>
</dbReference>
<dbReference type="GO" id="GO:0004096">
    <property type="term" value="F:catalase activity"/>
    <property type="evidence" value="ECO:0000318"/>
    <property type="project" value="GO_Central"/>
</dbReference>
<dbReference type="GO" id="GO:0020037">
    <property type="term" value="F:heme binding"/>
    <property type="evidence" value="ECO:0000318"/>
    <property type="project" value="GO_Central"/>
</dbReference>
<dbReference type="GO" id="GO:0046872">
    <property type="term" value="F:metal ion binding"/>
    <property type="evidence" value="ECO:0007669"/>
    <property type="project" value="UniProtKB-KW"/>
</dbReference>
<dbReference type="GO" id="GO:0070301">
    <property type="term" value="P:cellular response to hydrogen peroxide"/>
    <property type="evidence" value="ECO:0000318"/>
    <property type="project" value="GO_Central"/>
</dbReference>
<dbReference type="GO" id="GO:0042744">
    <property type="term" value="P:hydrogen peroxide catabolic process"/>
    <property type="evidence" value="ECO:0000318"/>
    <property type="project" value="GO_Central"/>
</dbReference>
<dbReference type="CDD" id="cd08200">
    <property type="entry name" value="catalase_peroxidase_2"/>
    <property type="match status" value="1"/>
</dbReference>
<dbReference type="FunFam" id="1.10.420.10:FF:000002">
    <property type="entry name" value="Catalase-peroxidase"/>
    <property type="match status" value="1"/>
</dbReference>
<dbReference type="FunFam" id="1.10.420.10:FF:000004">
    <property type="entry name" value="Catalase-peroxidase"/>
    <property type="match status" value="1"/>
</dbReference>
<dbReference type="FunFam" id="1.10.520.10:FF:000002">
    <property type="entry name" value="Catalase-peroxidase"/>
    <property type="match status" value="1"/>
</dbReference>
<dbReference type="Gene3D" id="1.10.520.10">
    <property type="match status" value="2"/>
</dbReference>
<dbReference type="Gene3D" id="1.10.420.10">
    <property type="entry name" value="Peroxidase, domain 2"/>
    <property type="match status" value="2"/>
</dbReference>
<dbReference type="HAMAP" id="MF_01961">
    <property type="entry name" value="Catal_peroxid"/>
    <property type="match status" value="1"/>
</dbReference>
<dbReference type="InterPro" id="IPR000763">
    <property type="entry name" value="Catalase_peroxidase"/>
</dbReference>
<dbReference type="InterPro" id="IPR002016">
    <property type="entry name" value="Haem_peroxidase"/>
</dbReference>
<dbReference type="InterPro" id="IPR010255">
    <property type="entry name" value="Haem_peroxidase_sf"/>
</dbReference>
<dbReference type="InterPro" id="IPR019794">
    <property type="entry name" value="Peroxidases_AS"/>
</dbReference>
<dbReference type="InterPro" id="IPR019793">
    <property type="entry name" value="Peroxidases_heam-ligand_BS"/>
</dbReference>
<dbReference type="NCBIfam" id="TIGR00198">
    <property type="entry name" value="cat_per_HPI"/>
    <property type="match status" value="1"/>
</dbReference>
<dbReference type="NCBIfam" id="NF011635">
    <property type="entry name" value="PRK15061.1"/>
    <property type="match status" value="1"/>
</dbReference>
<dbReference type="PANTHER" id="PTHR30555:SF0">
    <property type="entry name" value="CATALASE-PEROXIDASE"/>
    <property type="match status" value="1"/>
</dbReference>
<dbReference type="PANTHER" id="PTHR30555">
    <property type="entry name" value="HYDROPEROXIDASE I, BIFUNCTIONAL CATALASE-PEROXIDASE"/>
    <property type="match status" value="1"/>
</dbReference>
<dbReference type="Pfam" id="PF00141">
    <property type="entry name" value="peroxidase"/>
    <property type="match status" value="2"/>
</dbReference>
<dbReference type="PRINTS" id="PR00460">
    <property type="entry name" value="BPEROXIDASE"/>
</dbReference>
<dbReference type="PRINTS" id="PR00458">
    <property type="entry name" value="PEROXIDASE"/>
</dbReference>
<dbReference type="SUPFAM" id="SSF48113">
    <property type="entry name" value="Heme-dependent peroxidases"/>
    <property type="match status" value="2"/>
</dbReference>
<dbReference type="PROSITE" id="PS00435">
    <property type="entry name" value="PEROXIDASE_1"/>
    <property type="match status" value="1"/>
</dbReference>
<dbReference type="PROSITE" id="PS00436">
    <property type="entry name" value="PEROXIDASE_2"/>
    <property type="match status" value="1"/>
</dbReference>
<dbReference type="PROSITE" id="PS50873">
    <property type="entry name" value="PEROXIDASE_4"/>
    <property type="match status" value="1"/>
</dbReference>
<gene>
    <name evidence="1" type="primary">katG</name>
    <name type="ORF">SNOG_13840</name>
</gene>
<organism>
    <name type="scientific">Phaeosphaeria nodorum (strain SN15 / ATCC MYA-4574 / FGSC 10173)</name>
    <name type="common">Glume blotch fungus</name>
    <name type="synonym">Parastagonospora nodorum</name>
    <dbReference type="NCBI Taxonomy" id="321614"/>
    <lineage>
        <taxon>Eukaryota</taxon>
        <taxon>Fungi</taxon>
        <taxon>Dikarya</taxon>
        <taxon>Ascomycota</taxon>
        <taxon>Pezizomycotina</taxon>
        <taxon>Dothideomycetes</taxon>
        <taxon>Pleosporomycetidae</taxon>
        <taxon>Pleosporales</taxon>
        <taxon>Pleosporineae</taxon>
        <taxon>Phaeosphaeriaceae</taxon>
        <taxon>Parastagonospora</taxon>
    </lineage>
</organism>
<name>KATG_PHANO</name>
<comment type="function">
    <text evidence="1">Bifunctional enzyme with both catalase and broad-spectrum peroxidase activity.</text>
</comment>
<comment type="catalytic activity">
    <reaction evidence="1">
        <text>H2O2 + AH2 = A + 2 H2O</text>
        <dbReference type="Rhea" id="RHEA:30275"/>
        <dbReference type="ChEBI" id="CHEBI:13193"/>
        <dbReference type="ChEBI" id="CHEBI:15377"/>
        <dbReference type="ChEBI" id="CHEBI:16240"/>
        <dbReference type="ChEBI" id="CHEBI:17499"/>
        <dbReference type="EC" id="1.11.1.21"/>
    </reaction>
</comment>
<comment type="catalytic activity">
    <reaction evidence="1">
        <text>2 H2O2 = O2 + 2 H2O</text>
        <dbReference type="Rhea" id="RHEA:20309"/>
        <dbReference type="ChEBI" id="CHEBI:15377"/>
        <dbReference type="ChEBI" id="CHEBI:15379"/>
        <dbReference type="ChEBI" id="CHEBI:16240"/>
        <dbReference type="EC" id="1.11.1.21"/>
    </reaction>
</comment>
<comment type="cofactor">
    <cofactor evidence="1">
        <name>heme b</name>
        <dbReference type="ChEBI" id="CHEBI:60344"/>
    </cofactor>
    <text evidence="1">Binds 1 heme b (iron(II)-protoporphyrin IX) group per monomer.</text>
</comment>
<comment type="subunit">
    <text evidence="1">Homodimer or homotetramer.</text>
</comment>
<comment type="subcellular location">
    <subcellularLocation>
        <location evidence="1">Cytoplasm</location>
    </subcellularLocation>
</comment>
<comment type="PTM">
    <text evidence="1">Formation of the three residue Trp-Tyr-Met cross-link is important for the catalase, but not the peroxidase activity of the enzyme.</text>
</comment>
<comment type="similarity">
    <text evidence="1">Belongs to the peroxidase family. Peroxidase/catalase subfamily.</text>
</comment>
<feature type="chain" id="PRO_0000354109" description="Catalase-peroxidase">
    <location>
        <begin position="1"/>
        <end position="751"/>
    </location>
</feature>
<feature type="active site" description="Proton acceptor" evidence="1">
    <location>
        <position position="93"/>
    </location>
</feature>
<feature type="binding site" description="axial binding residue" evidence="1">
    <location>
        <position position="281"/>
    </location>
    <ligand>
        <name>heme b</name>
        <dbReference type="ChEBI" id="CHEBI:60344"/>
    </ligand>
    <ligandPart>
        <name>Fe</name>
        <dbReference type="ChEBI" id="CHEBI:18248"/>
    </ligandPart>
</feature>
<feature type="site" description="Transition state stabilizer" evidence="1">
    <location>
        <position position="89"/>
    </location>
</feature>
<feature type="cross-link" description="Tryptophyl-tyrosyl-methioninium (Trp-Tyr) (with M-266)" evidence="1">
    <location>
        <begin position="92"/>
        <end position="240"/>
    </location>
</feature>
<feature type="cross-link" description="Tryptophyl-tyrosyl-methioninium (Tyr-Met) (with W-92)" evidence="1">
    <location>
        <begin position="240"/>
        <end position="266"/>
    </location>
</feature>
<accession>Q0U324</accession>
<reference key="1">
    <citation type="journal article" date="2007" name="Plant Cell">
        <title>Dothideomycete-plant interactions illuminated by genome sequencing and EST analysis of the wheat pathogen Stagonospora nodorum.</title>
        <authorList>
            <person name="Hane J.K."/>
            <person name="Lowe R.G.T."/>
            <person name="Solomon P.S."/>
            <person name="Tan K.-C."/>
            <person name="Schoch C.L."/>
            <person name="Spatafora J.W."/>
            <person name="Crous P.W."/>
            <person name="Kodira C.D."/>
            <person name="Birren B.W."/>
            <person name="Galagan J.E."/>
            <person name="Torriani S.F.F."/>
            <person name="McDonald B.A."/>
            <person name="Oliver R.P."/>
        </authorList>
    </citation>
    <scope>NUCLEOTIDE SEQUENCE [LARGE SCALE GENOMIC DNA]</scope>
    <source>
        <strain>SN15 / ATCC MYA-4574 / FGSC 10173</strain>
    </source>
</reference>